<protein>
    <recommendedName>
        <fullName evidence="1">V-type ATP synthase beta chain</fullName>
    </recommendedName>
    <alternativeName>
        <fullName evidence="1">V-ATPase subunit B</fullName>
    </alternativeName>
</protein>
<accession>B8CZG7</accession>
<evidence type="ECO:0000255" key="1">
    <source>
        <dbReference type="HAMAP-Rule" id="MF_00310"/>
    </source>
</evidence>
<name>VATB_HALOH</name>
<feature type="chain" id="PRO_1000132889" description="V-type ATP synthase beta chain">
    <location>
        <begin position="1"/>
        <end position="463"/>
    </location>
</feature>
<gene>
    <name evidence="1" type="primary">atpB</name>
    <name type="ordered locus">Hore_19390</name>
</gene>
<comment type="function">
    <text evidence="1">Produces ATP from ADP in the presence of a proton gradient across the membrane. The V-type beta chain is a regulatory subunit.</text>
</comment>
<comment type="similarity">
    <text evidence="1">Belongs to the ATPase alpha/beta chains family.</text>
</comment>
<dbReference type="EMBL" id="CP001098">
    <property type="protein sequence ID" value="ACL70686.1"/>
    <property type="molecule type" value="Genomic_DNA"/>
</dbReference>
<dbReference type="RefSeq" id="WP_015923655.1">
    <property type="nucleotide sequence ID" value="NC_011899.1"/>
</dbReference>
<dbReference type="SMR" id="B8CZG7"/>
<dbReference type="STRING" id="373903.Hore_19390"/>
<dbReference type="KEGG" id="hor:Hore_19390"/>
<dbReference type="eggNOG" id="COG1156">
    <property type="taxonomic scope" value="Bacteria"/>
</dbReference>
<dbReference type="HOGENOM" id="CLU_022916_0_0_9"/>
<dbReference type="OrthoDB" id="9802718at2"/>
<dbReference type="Proteomes" id="UP000000719">
    <property type="component" value="Chromosome"/>
</dbReference>
<dbReference type="GO" id="GO:0045259">
    <property type="term" value="C:proton-transporting ATP synthase complex"/>
    <property type="evidence" value="ECO:0007669"/>
    <property type="project" value="UniProtKB-ARBA"/>
</dbReference>
<dbReference type="GO" id="GO:0005524">
    <property type="term" value="F:ATP binding"/>
    <property type="evidence" value="ECO:0007669"/>
    <property type="project" value="UniProtKB-UniRule"/>
</dbReference>
<dbReference type="GO" id="GO:0046933">
    <property type="term" value="F:proton-transporting ATP synthase activity, rotational mechanism"/>
    <property type="evidence" value="ECO:0007669"/>
    <property type="project" value="UniProtKB-UniRule"/>
</dbReference>
<dbReference type="GO" id="GO:0046961">
    <property type="term" value="F:proton-transporting ATPase activity, rotational mechanism"/>
    <property type="evidence" value="ECO:0007669"/>
    <property type="project" value="TreeGrafter"/>
</dbReference>
<dbReference type="GO" id="GO:0042777">
    <property type="term" value="P:proton motive force-driven plasma membrane ATP synthesis"/>
    <property type="evidence" value="ECO:0007669"/>
    <property type="project" value="UniProtKB-UniRule"/>
</dbReference>
<dbReference type="CDD" id="cd18112">
    <property type="entry name" value="ATP-synt_V_A-type_beta_C"/>
    <property type="match status" value="1"/>
</dbReference>
<dbReference type="CDD" id="cd18118">
    <property type="entry name" value="ATP-synt_V_A-type_beta_N"/>
    <property type="match status" value="1"/>
</dbReference>
<dbReference type="CDD" id="cd01135">
    <property type="entry name" value="V_A-ATPase_B"/>
    <property type="match status" value="1"/>
</dbReference>
<dbReference type="Gene3D" id="3.40.50.12240">
    <property type="match status" value="1"/>
</dbReference>
<dbReference type="HAMAP" id="MF_00310">
    <property type="entry name" value="ATP_synth_B_arch"/>
    <property type="match status" value="1"/>
</dbReference>
<dbReference type="InterPro" id="IPR055190">
    <property type="entry name" value="ATP-synt_VA_C"/>
</dbReference>
<dbReference type="InterPro" id="IPR020003">
    <property type="entry name" value="ATPase_a/bsu_AS"/>
</dbReference>
<dbReference type="InterPro" id="IPR004100">
    <property type="entry name" value="ATPase_F1/V1/A1_a/bsu_N"/>
</dbReference>
<dbReference type="InterPro" id="IPR036121">
    <property type="entry name" value="ATPase_F1/V1/A1_a/bsu_N_sf"/>
</dbReference>
<dbReference type="InterPro" id="IPR000194">
    <property type="entry name" value="ATPase_F1/V1/A1_a/bsu_nucl-bd"/>
</dbReference>
<dbReference type="InterPro" id="IPR027417">
    <property type="entry name" value="P-loop_NTPase"/>
</dbReference>
<dbReference type="InterPro" id="IPR022879">
    <property type="entry name" value="V-ATPase_su_B/beta"/>
</dbReference>
<dbReference type="NCBIfam" id="NF003235">
    <property type="entry name" value="PRK04196.1"/>
    <property type="match status" value="1"/>
</dbReference>
<dbReference type="PANTHER" id="PTHR43389">
    <property type="entry name" value="V-TYPE PROTON ATPASE SUBUNIT B"/>
    <property type="match status" value="1"/>
</dbReference>
<dbReference type="PANTHER" id="PTHR43389:SF4">
    <property type="entry name" value="V-TYPE PROTON ATPASE SUBUNIT B"/>
    <property type="match status" value="1"/>
</dbReference>
<dbReference type="Pfam" id="PF00006">
    <property type="entry name" value="ATP-synt_ab"/>
    <property type="match status" value="1"/>
</dbReference>
<dbReference type="Pfam" id="PF02874">
    <property type="entry name" value="ATP-synt_ab_N"/>
    <property type="match status" value="1"/>
</dbReference>
<dbReference type="Pfam" id="PF22919">
    <property type="entry name" value="ATP-synt_VA_C"/>
    <property type="match status" value="1"/>
</dbReference>
<dbReference type="PIRSF" id="PIRSF039114">
    <property type="entry name" value="V-ATPsynth_beta/V-ATPase_B"/>
    <property type="match status" value="1"/>
</dbReference>
<dbReference type="SUPFAM" id="SSF47917">
    <property type="entry name" value="C-terminal domain of alpha and beta subunits of F1 ATP synthase"/>
    <property type="match status" value="1"/>
</dbReference>
<dbReference type="SUPFAM" id="SSF50615">
    <property type="entry name" value="N-terminal domain of alpha and beta subunits of F1 ATP synthase"/>
    <property type="match status" value="1"/>
</dbReference>
<dbReference type="SUPFAM" id="SSF52540">
    <property type="entry name" value="P-loop containing nucleoside triphosphate hydrolases"/>
    <property type="match status" value="1"/>
</dbReference>
<dbReference type="PROSITE" id="PS00152">
    <property type="entry name" value="ATPASE_ALPHA_BETA"/>
    <property type="match status" value="1"/>
</dbReference>
<organism>
    <name type="scientific">Halothermothrix orenii (strain H 168 / OCM 544 / DSM 9562)</name>
    <dbReference type="NCBI Taxonomy" id="373903"/>
    <lineage>
        <taxon>Bacteria</taxon>
        <taxon>Bacillati</taxon>
        <taxon>Bacillota</taxon>
        <taxon>Clostridia</taxon>
        <taxon>Halanaerobiales</taxon>
        <taxon>Halothermotrichaceae</taxon>
        <taxon>Halothermothrix</taxon>
    </lineage>
</organism>
<proteinExistence type="inferred from homology"/>
<reference key="1">
    <citation type="journal article" date="2009" name="PLoS ONE">
        <title>Genome analysis of the anaerobic thermohalophilic bacterium Halothermothrix orenii.</title>
        <authorList>
            <person name="Mavromatis K."/>
            <person name="Ivanova N."/>
            <person name="Anderson I."/>
            <person name="Lykidis A."/>
            <person name="Hooper S.D."/>
            <person name="Sun H."/>
            <person name="Kunin V."/>
            <person name="Lapidus A."/>
            <person name="Hugenholtz P."/>
            <person name="Patel B."/>
            <person name="Kyrpides N.C."/>
        </authorList>
    </citation>
    <scope>NUCLEOTIDE SEQUENCE [LARGE SCALE GENOMIC DNA]</scope>
    <source>
        <strain>H 168 / OCM 544 / DSM 9562</strain>
    </source>
</reference>
<sequence>MLTKEYRGVASINGPLVVVDGVTDVGFDEMVEVITPDKHKRRGRVLQVSKNRAVIQVFEGTSGLATETTRVKFLRHPMEIALSRDILGRVFNGVGEPIDGGGEVYSNKKYNINGNAINPYSRQYPRNYIQTGVSAIDGLITLIRGQKLPIFSGNGLPHNQLAAQIARQARLGDDNEDFAVVFVAMGIKHDDANFFINSFEKSGVLQNVVVFLNLADDPAVERIIAPRIGLTAAEYLAFEEGMHILVIMTDMTNYCEALRELSSRREEVPSRKGYPGYLYSDLASLYERAGMIKGERGSITQLPILTMPNDDITHPVPDLTGYITEGQIVLKRDLYQRGVYPPINILPSLSRLMKDGIGEGFTREDHPNVSSQLYAAYSRVQEVKSLASVIGEDELSSLDQTYLKFGRVFEKRFLSQGREENRTIEQTLDLAWEVLSELPPTELDRISGEELEKYYRGSVNDNG</sequence>
<keyword id="KW-0066">ATP synthesis</keyword>
<keyword id="KW-0375">Hydrogen ion transport</keyword>
<keyword id="KW-0406">Ion transport</keyword>
<keyword id="KW-1185">Reference proteome</keyword>
<keyword id="KW-0813">Transport</keyword>